<accession>B7VBC3</accession>
<proteinExistence type="inferred from homology"/>
<feature type="chain" id="PRO_1000116954" description="Adenosine 5'-phosphosulfate reductase">
    <location>
        <begin position="1"/>
        <end position="267"/>
    </location>
</feature>
<feature type="region of interest" description="Disordered" evidence="2">
    <location>
        <begin position="1"/>
        <end position="29"/>
    </location>
</feature>
<feature type="compositionally biased region" description="Polar residues" evidence="2">
    <location>
        <begin position="11"/>
        <end position="25"/>
    </location>
</feature>
<feature type="active site" description="Nucleophile; cysteine thiosulfonate intermediate" evidence="1">
    <location>
        <position position="256"/>
    </location>
</feature>
<feature type="binding site" evidence="1">
    <location>
        <position position="139"/>
    </location>
    <ligand>
        <name>[4Fe-4S] cluster</name>
        <dbReference type="ChEBI" id="CHEBI:49883"/>
    </ligand>
</feature>
<feature type="binding site" evidence="1">
    <location>
        <position position="140"/>
    </location>
    <ligand>
        <name>[4Fe-4S] cluster</name>
        <dbReference type="ChEBI" id="CHEBI:49883"/>
    </ligand>
</feature>
<feature type="binding site" evidence="1">
    <location>
        <position position="228"/>
    </location>
    <ligand>
        <name>[4Fe-4S] cluster</name>
        <dbReference type="ChEBI" id="CHEBI:49883"/>
    </ligand>
</feature>
<feature type="binding site" evidence="1">
    <location>
        <position position="231"/>
    </location>
    <ligand>
        <name>[4Fe-4S] cluster</name>
        <dbReference type="ChEBI" id="CHEBI:49883"/>
    </ligand>
</feature>
<dbReference type="EC" id="1.8.4.10" evidence="1"/>
<dbReference type="EMBL" id="FM209186">
    <property type="protein sequence ID" value="CAW28300.1"/>
    <property type="molecule type" value="Genomic_DNA"/>
</dbReference>
<dbReference type="RefSeq" id="WP_003120317.1">
    <property type="nucleotide sequence ID" value="NC_011770.1"/>
</dbReference>
<dbReference type="SMR" id="B7VBC3"/>
<dbReference type="KEGG" id="pag:PLES_35731"/>
<dbReference type="HOGENOM" id="CLU_044089_1_0_6"/>
<dbReference type="GO" id="GO:0005737">
    <property type="term" value="C:cytoplasm"/>
    <property type="evidence" value="ECO:0007669"/>
    <property type="project" value="UniProtKB-SubCell"/>
</dbReference>
<dbReference type="GO" id="GO:0051539">
    <property type="term" value="F:4 iron, 4 sulfur cluster binding"/>
    <property type="evidence" value="ECO:0007669"/>
    <property type="project" value="UniProtKB-UniRule"/>
</dbReference>
<dbReference type="GO" id="GO:0043866">
    <property type="term" value="F:adenylyl-sulfate reductase (thioredoxin) activity"/>
    <property type="evidence" value="ECO:0007669"/>
    <property type="project" value="UniProtKB-EC"/>
</dbReference>
<dbReference type="GO" id="GO:0046872">
    <property type="term" value="F:metal ion binding"/>
    <property type="evidence" value="ECO:0007669"/>
    <property type="project" value="UniProtKB-KW"/>
</dbReference>
<dbReference type="GO" id="GO:0004604">
    <property type="term" value="F:phosphoadenylyl-sulfate reductase (thioredoxin) activity"/>
    <property type="evidence" value="ECO:0007669"/>
    <property type="project" value="UniProtKB-UniRule"/>
</dbReference>
<dbReference type="GO" id="GO:0019344">
    <property type="term" value="P:cysteine biosynthetic process"/>
    <property type="evidence" value="ECO:0007669"/>
    <property type="project" value="InterPro"/>
</dbReference>
<dbReference type="GO" id="GO:0070814">
    <property type="term" value="P:hydrogen sulfide biosynthetic process"/>
    <property type="evidence" value="ECO:0007669"/>
    <property type="project" value="UniProtKB-UniRule"/>
</dbReference>
<dbReference type="GO" id="GO:0019379">
    <property type="term" value="P:sulfate assimilation, phosphoadenylyl sulfate reduction by phosphoadenylyl-sulfate reductase (thioredoxin)"/>
    <property type="evidence" value="ECO:0007669"/>
    <property type="project" value="UniProtKB-UniRule"/>
</dbReference>
<dbReference type="CDD" id="cd23945">
    <property type="entry name" value="PAPS_reductase"/>
    <property type="match status" value="1"/>
</dbReference>
<dbReference type="FunFam" id="3.40.50.620:FF:000153">
    <property type="entry name" value="Phosphoadenosine phosphosulfate reductase"/>
    <property type="match status" value="1"/>
</dbReference>
<dbReference type="Gene3D" id="3.40.50.620">
    <property type="entry name" value="HUPs"/>
    <property type="match status" value="1"/>
</dbReference>
<dbReference type="HAMAP" id="MF_00063">
    <property type="entry name" value="CysH"/>
    <property type="match status" value="1"/>
</dbReference>
<dbReference type="InterPro" id="IPR011798">
    <property type="entry name" value="APS_reductase"/>
</dbReference>
<dbReference type="InterPro" id="IPR004511">
    <property type="entry name" value="PAPS/APS_Rdtase"/>
</dbReference>
<dbReference type="InterPro" id="IPR002500">
    <property type="entry name" value="PAPS_reduct_dom"/>
</dbReference>
<dbReference type="InterPro" id="IPR014729">
    <property type="entry name" value="Rossmann-like_a/b/a_fold"/>
</dbReference>
<dbReference type="NCBIfam" id="TIGR02055">
    <property type="entry name" value="APS_reductase"/>
    <property type="match status" value="1"/>
</dbReference>
<dbReference type="NCBIfam" id="TIGR00434">
    <property type="entry name" value="cysH"/>
    <property type="match status" value="1"/>
</dbReference>
<dbReference type="NCBIfam" id="NF002537">
    <property type="entry name" value="PRK02090.1"/>
    <property type="match status" value="1"/>
</dbReference>
<dbReference type="PANTHER" id="PTHR46482:SF9">
    <property type="entry name" value="5'-ADENYLYLSULFATE REDUCTASE 1, CHLOROPLASTIC"/>
    <property type="match status" value="1"/>
</dbReference>
<dbReference type="PANTHER" id="PTHR46482">
    <property type="entry name" value="5'-ADENYLYLSULFATE REDUCTASE 3, CHLOROPLASTIC"/>
    <property type="match status" value="1"/>
</dbReference>
<dbReference type="Pfam" id="PF01507">
    <property type="entry name" value="PAPS_reduct"/>
    <property type="match status" value="1"/>
</dbReference>
<dbReference type="PIRSF" id="PIRSF000857">
    <property type="entry name" value="PAPS_reductase"/>
    <property type="match status" value="1"/>
</dbReference>
<dbReference type="SUPFAM" id="SSF52402">
    <property type="entry name" value="Adenine nucleotide alpha hydrolases-like"/>
    <property type="match status" value="1"/>
</dbReference>
<gene>
    <name evidence="1" type="primary">cysH</name>
    <name type="ordered locus">PLES_35731</name>
</gene>
<reference key="1">
    <citation type="journal article" date="2009" name="Genome Res.">
        <title>Newly introduced genomic prophage islands are critical determinants of in vivo competitiveness in the Liverpool epidemic strain of Pseudomonas aeruginosa.</title>
        <authorList>
            <person name="Winstanley C."/>
            <person name="Langille M.G.I."/>
            <person name="Fothergill J.L."/>
            <person name="Kukavica-Ibrulj I."/>
            <person name="Paradis-Bleau C."/>
            <person name="Sanschagrin F."/>
            <person name="Thomson N.R."/>
            <person name="Winsor G.L."/>
            <person name="Quail M.A."/>
            <person name="Lennard N."/>
            <person name="Bignell A."/>
            <person name="Clarke L."/>
            <person name="Seeger K."/>
            <person name="Saunders D."/>
            <person name="Harris D."/>
            <person name="Parkhill J."/>
            <person name="Hancock R.E.W."/>
            <person name="Brinkman F.S.L."/>
            <person name="Levesque R.C."/>
        </authorList>
    </citation>
    <scope>NUCLEOTIDE SEQUENCE [LARGE SCALE GENOMIC DNA]</scope>
    <source>
        <strain>LESB58</strain>
    </source>
</reference>
<sequence>MPPFATIPATERNSAAQHQDPSPMSQPFDLPALASSLADKSPQDILKAAFEHFGDELWISFSGAEDVVLVDMAWKLNRNVKVFSLDTGRLHPETYRFIDQVREHYGIAIDVLSPDPRLLEPLVKEKGLFSFYRDGHGECCGIRKIEPLKRKLAGVRAWATGQRRDQSPGTRSQVAVLEIDGAFSTPEKPLYKFNPLSSMTSEEVWGYIRMLELPYNSLHERGYISIGCEPCTRPVLPNQHEREGRWWWEEATHKECGLHAGNLISKA</sequence>
<protein>
    <recommendedName>
        <fullName evidence="1">Adenosine 5'-phosphosulfate reductase</fullName>
        <shortName evidence="1">APS reductase</shortName>
        <ecNumber evidence="1">1.8.4.10</ecNumber>
    </recommendedName>
    <alternativeName>
        <fullName evidence="1">5'-adenylylsulfate reductase</fullName>
    </alternativeName>
    <alternativeName>
        <fullName evidence="1">Thioredoxin-dependent 5'-adenylylsulfate reductase</fullName>
    </alternativeName>
</protein>
<keyword id="KW-0963">Cytoplasm</keyword>
<keyword id="KW-0408">Iron</keyword>
<keyword id="KW-0411">Iron-sulfur</keyword>
<keyword id="KW-0479">Metal-binding</keyword>
<keyword id="KW-0560">Oxidoreductase</keyword>
<name>CYSH_PSEA8</name>
<evidence type="ECO:0000255" key="1">
    <source>
        <dbReference type="HAMAP-Rule" id="MF_00063"/>
    </source>
</evidence>
<evidence type="ECO:0000256" key="2">
    <source>
        <dbReference type="SAM" id="MobiDB-lite"/>
    </source>
</evidence>
<organism>
    <name type="scientific">Pseudomonas aeruginosa (strain LESB58)</name>
    <dbReference type="NCBI Taxonomy" id="557722"/>
    <lineage>
        <taxon>Bacteria</taxon>
        <taxon>Pseudomonadati</taxon>
        <taxon>Pseudomonadota</taxon>
        <taxon>Gammaproteobacteria</taxon>
        <taxon>Pseudomonadales</taxon>
        <taxon>Pseudomonadaceae</taxon>
        <taxon>Pseudomonas</taxon>
    </lineage>
</organism>
<comment type="function">
    <text evidence="1">Catalyzes the formation of sulfite from adenosine 5'-phosphosulfate (APS) using thioredoxin as an electron donor.</text>
</comment>
<comment type="catalytic activity">
    <reaction evidence="1">
        <text>[thioredoxin]-disulfide + sulfite + AMP + 2 H(+) = adenosine 5'-phosphosulfate + [thioredoxin]-dithiol</text>
        <dbReference type="Rhea" id="RHEA:21976"/>
        <dbReference type="Rhea" id="RHEA-COMP:10698"/>
        <dbReference type="Rhea" id="RHEA-COMP:10700"/>
        <dbReference type="ChEBI" id="CHEBI:15378"/>
        <dbReference type="ChEBI" id="CHEBI:17359"/>
        <dbReference type="ChEBI" id="CHEBI:29950"/>
        <dbReference type="ChEBI" id="CHEBI:50058"/>
        <dbReference type="ChEBI" id="CHEBI:58243"/>
        <dbReference type="ChEBI" id="CHEBI:456215"/>
        <dbReference type="EC" id="1.8.4.10"/>
    </reaction>
</comment>
<comment type="cofactor">
    <cofactor evidence="1">
        <name>[4Fe-4S] cluster</name>
        <dbReference type="ChEBI" id="CHEBI:49883"/>
    </cofactor>
    <text evidence="1">Binds 1 [4Fe-4S] cluster per subunit.</text>
</comment>
<comment type="pathway">
    <text evidence="1">Sulfur metabolism; hydrogen sulfide biosynthesis; sulfite from sulfate.</text>
</comment>
<comment type="subcellular location">
    <subcellularLocation>
        <location evidence="1">Cytoplasm</location>
    </subcellularLocation>
</comment>
<comment type="similarity">
    <text evidence="1">Belongs to the PAPS reductase family. CysH subfamily.</text>
</comment>